<feature type="chain" id="PRO_0000256490" description="1-deoxy-D-xylulose-5-phosphate synthase">
    <location>
        <begin position="1"/>
        <end position="648"/>
    </location>
</feature>
<feature type="binding site" evidence="1">
    <location>
        <position position="72"/>
    </location>
    <ligand>
        <name>thiamine diphosphate</name>
        <dbReference type="ChEBI" id="CHEBI:58937"/>
    </ligand>
</feature>
<feature type="binding site" evidence="1">
    <location>
        <begin position="113"/>
        <end position="115"/>
    </location>
    <ligand>
        <name>thiamine diphosphate</name>
        <dbReference type="ChEBI" id="CHEBI:58937"/>
    </ligand>
</feature>
<feature type="binding site" evidence="1">
    <location>
        <position position="144"/>
    </location>
    <ligand>
        <name>Mg(2+)</name>
        <dbReference type="ChEBI" id="CHEBI:18420"/>
    </ligand>
</feature>
<feature type="binding site" evidence="1">
    <location>
        <begin position="145"/>
        <end position="146"/>
    </location>
    <ligand>
        <name>thiamine diphosphate</name>
        <dbReference type="ChEBI" id="CHEBI:58937"/>
    </ligand>
</feature>
<feature type="binding site" evidence="1">
    <location>
        <position position="173"/>
    </location>
    <ligand>
        <name>Mg(2+)</name>
        <dbReference type="ChEBI" id="CHEBI:18420"/>
    </ligand>
</feature>
<feature type="binding site" evidence="1">
    <location>
        <position position="173"/>
    </location>
    <ligand>
        <name>thiamine diphosphate</name>
        <dbReference type="ChEBI" id="CHEBI:58937"/>
    </ligand>
</feature>
<feature type="binding site" evidence="1">
    <location>
        <position position="363"/>
    </location>
    <ligand>
        <name>thiamine diphosphate</name>
        <dbReference type="ChEBI" id="CHEBI:58937"/>
    </ligand>
</feature>
<protein>
    <recommendedName>
        <fullName evidence="1">1-deoxy-D-xylulose-5-phosphate synthase</fullName>
        <ecNumber evidence="1">2.2.1.7</ecNumber>
    </recommendedName>
    <alternativeName>
        <fullName evidence="1">1-deoxyxylulose-5-phosphate synthase</fullName>
        <shortName evidence="1">DXP synthase</shortName>
        <shortName evidence="1">DXPS</shortName>
    </alternativeName>
</protein>
<comment type="function">
    <text evidence="1">Catalyzes the acyloin condensation reaction between C atoms 2 and 3 of pyruvate and glyceraldehyde 3-phosphate to yield 1-deoxy-D-xylulose-5-phosphate (DXP).</text>
</comment>
<comment type="catalytic activity">
    <reaction evidence="1">
        <text>D-glyceraldehyde 3-phosphate + pyruvate + H(+) = 1-deoxy-D-xylulose 5-phosphate + CO2</text>
        <dbReference type="Rhea" id="RHEA:12605"/>
        <dbReference type="ChEBI" id="CHEBI:15361"/>
        <dbReference type="ChEBI" id="CHEBI:15378"/>
        <dbReference type="ChEBI" id="CHEBI:16526"/>
        <dbReference type="ChEBI" id="CHEBI:57792"/>
        <dbReference type="ChEBI" id="CHEBI:59776"/>
        <dbReference type="EC" id="2.2.1.7"/>
    </reaction>
</comment>
<comment type="cofactor">
    <cofactor evidence="1">
        <name>Mg(2+)</name>
        <dbReference type="ChEBI" id="CHEBI:18420"/>
    </cofactor>
    <text evidence="1">Binds 1 Mg(2+) ion per subunit.</text>
</comment>
<comment type="cofactor">
    <cofactor evidence="1">
        <name>thiamine diphosphate</name>
        <dbReference type="ChEBI" id="CHEBI:58937"/>
    </cofactor>
    <text evidence="1">Binds 1 thiamine pyrophosphate per subunit.</text>
</comment>
<comment type="pathway">
    <text evidence="1">Metabolic intermediate biosynthesis; 1-deoxy-D-xylulose 5-phosphate biosynthesis; 1-deoxy-D-xylulose 5-phosphate from D-glyceraldehyde 3-phosphate and pyruvate: step 1/1.</text>
</comment>
<comment type="subunit">
    <text evidence="1">Homodimer.</text>
</comment>
<comment type="similarity">
    <text evidence="1">Belongs to the transketolase family. DXPS subfamily.</text>
</comment>
<sequence length="648" mass="69789">MHLRDLTGPEQLKRLAPAELAQLAAEIRRVILETVATNGGHLAPNLGVVELTLALHIVFDSPRDKILWDVSHQSYVHKLLTGRLHQFHTLRQFGGIAGFTDPRESVHDHFHWGHASTSISAAVGMAKARDLAGDDYEVVAVIGDGALTGGMAYEALDHAGHDKTKVIVVLNDNSMSIAPNVGGISNYLARIRTGPSYQRVKHDVAEALRQIPLIGPQALELADRLKEGVKHLLVHNMFFEDLGFTYLGPVDGHNVSALVDVLRQARAYPGPTVVHVVTTKGKGVPYAEQLPDKFHGGGPFDVATGRTGPGSLTYSEVFGNVMCKLAAEDPRVCAITAAMPSGTGLSRFARQFPDRYFDVGIAEQHAVTFAAGLAKGGMRPVFAVYSTFLQRAYDQVIHDVALQNLPVTLAIDRGGLVEDGATHQGVFDVAYLRAIPNMVVMAPKDENELQHMLYTALCHDGPAALRYPRGKAQGVPLDETLQPLPIGRGEVMQEGADVALIGLGTMARVCQEAARLLAEKSISAMVINPRFVKPLDAELLLRAGREVGAVVTVEEACLAGGFGSAVLELYAAHGVNARVERMGIPDEFVDHGQPARYLERYGLTPEGVAQRAEALLLRMRSDLAAQPARRSRSVRRLSGAKAAGNGET</sequence>
<name>DXS_SYMTH</name>
<organism>
    <name type="scientific">Symbiobacterium thermophilum (strain DSM 24528 / JCM 14929 / IAM 14863 / T)</name>
    <dbReference type="NCBI Taxonomy" id="292459"/>
    <lineage>
        <taxon>Bacteria</taxon>
        <taxon>Bacillati</taxon>
        <taxon>Bacillota</taxon>
        <taxon>Clostridia</taxon>
        <taxon>Eubacteriales</taxon>
        <taxon>Symbiobacteriaceae</taxon>
        <taxon>Symbiobacterium</taxon>
    </lineage>
</organism>
<accession>Q67NB6</accession>
<gene>
    <name evidence="1" type="primary">dxs</name>
    <name type="ordered locus">STH1842</name>
</gene>
<dbReference type="EC" id="2.2.1.7" evidence="1"/>
<dbReference type="EMBL" id="AP006840">
    <property type="protein sequence ID" value="BAD40827.1"/>
    <property type="molecule type" value="Genomic_DNA"/>
</dbReference>
<dbReference type="RefSeq" id="WP_011195970.1">
    <property type="nucleotide sequence ID" value="NC_006177.1"/>
</dbReference>
<dbReference type="SMR" id="Q67NB6"/>
<dbReference type="STRING" id="292459.STH1842"/>
<dbReference type="KEGG" id="sth:STH1842"/>
<dbReference type="eggNOG" id="COG1154">
    <property type="taxonomic scope" value="Bacteria"/>
</dbReference>
<dbReference type="HOGENOM" id="CLU_009227_1_4_9"/>
<dbReference type="OrthoDB" id="9803371at2"/>
<dbReference type="UniPathway" id="UPA00064">
    <property type="reaction ID" value="UER00091"/>
</dbReference>
<dbReference type="Proteomes" id="UP000000417">
    <property type="component" value="Chromosome"/>
</dbReference>
<dbReference type="GO" id="GO:0005829">
    <property type="term" value="C:cytosol"/>
    <property type="evidence" value="ECO:0007669"/>
    <property type="project" value="TreeGrafter"/>
</dbReference>
<dbReference type="GO" id="GO:0008661">
    <property type="term" value="F:1-deoxy-D-xylulose-5-phosphate synthase activity"/>
    <property type="evidence" value="ECO:0007669"/>
    <property type="project" value="UniProtKB-UniRule"/>
</dbReference>
<dbReference type="GO" id="GO:0000287">
    <property type="term" value="F:magnesium ion binding"/>
    <property type="evidence" value="ECO:0007669"/>
    <property type="project" value="UniProtKB-UniRule"/>
</dbReference>
<dbReference type="GO" id="GO:0030976">
    <property type="term" value="F:thiamine pyrophosphate binding"/>
    <property type="evidence" value="ECO:0007669"/>
    <property type="project" value="UniProtKB-UniRule"/>
</dbReference>
<dbReference type="GO" id="GO:0052865">
    <property type="term" value="P:1-deoxy-D-xylulose 5-phosphate biosynthetic process"/>
    <property type="evidence" value="ECO:0007669"/>
    <property type="project" value="UniProtKB-UniPathway"/>
</dbReference>
<dbReference type="GO" id="GO:0019288">
    <property type="term" value="P:isopentenyl diphosphate biosynthetic process, methylerythritol 4-phosphate pathway"/>
    <property type="evidence" value="ECO:0007669"/>
    <property type="project" value="TreeGrafter"/>
</dbReference>
<dbReference type="GO" id="GO:0016114">
    <property type="term" value="P:terpenoid biosynthetic process"/>
    <property type="evidence" value="ECO:0007669"/>
    <property type="project" value="UniProtKB-UniRule"/>
</dbReference>
<dbReference type="GO" id="GO:0009228">
    <property type="term" value="P:thiamine biosynthetic process"/>
    <property type="evidence" value="ECO:0007669"/>
    <property type="project" value="UniProtKB-UniRule"/>
</dbReference>
<dbReference type="CDD" id="cd02007">
    <property type="entry name" value="TPP_DXS"/>
    <property type="match status" value="1"/>
</dbReference>
<dbReference type="CDD" id="cd07033">
    <property type="entry name" value="TPP_PYR_DXS_TK_like"/>
    <property type="match status" value="1"/>
</dbReference>
<dbReference type="FunFam" id="3.40.50.920:FF:000002">
    <property type="entry name" value="1-deoxy-D-xylulose-5-phosphate synthase"/>
    <property type="match status" value="1"/>
</dbReference>
<dbReference type="FunFam" id="3.40.50.970:FF:000005">
    <property type="entry name" value="1-deoxy-D-xylulose-5-phosphate synthase"/>
    <property type="match status" value="1"/>
</dbReference>
<dbReference type="Gene3D" id="3.40.50.920">
    <property type="match status" value="1"/>
</dbReference>
<dbReference type="Gene3D" id="3.40.50.970">
    <property type="match status" value="2"/>
</dbReference>
<dbReference type="HAMAP" id="MF_00315">
    <property type="entry name" value="DXP_synth"/>
    <property type="match status" value="1"/>
</dbReference>
<dbReference type="InterPro" id="IPR005477">
    <property type="entry name" value="Dxylulose-5-P_synthase"/>
</dbReference>
<dbReference type="InterPro" id="IPR029061">
    <property type="entry name" value="THDP-binding"/>
</dbReference>
<dbReference type="InterPro" id="IPR009014">
    <property type="entry name" value="Transketo_C/PFOR_II"/>
</dbReference>
<dbReference type="InterPro" id="IPR005475">
    <property type="entry name" value="Transketolase-like_Pyr-bd"/>
</dbReference>
<dbReference type="InterPro" id="IPR033248">
    <property type="entry name" value="Transketolase_C"/>
</dbReference>
<dbReference type="InterPro" id="IPR049557">
    <property type="entry name" value="Transketolase_CS"/>
</dbReference>
<dbReference type="NCBIfam" id="TIGR00204">
    <property type="entry name" value="dxs"/>
    <property type="match status" value="1"/>
</dbReference>
<dbReference type="NCBIfam" id="NF003933">
    <property type="entry name" value="PRK05444.2-2"/>
    <property type="match status" value="1"/>
</dbReference>
<dbReference type="PANTHER" id="PTHR43322">
    <property type="entry name" value="1-D-DEOXYXYLULOSE 5-PHOSPHATE SYNTHASE-RELATED"/>
    <property type="match status" value="1"/>
</dbReference>
<dbReference type="PANTHER" id="PTHR43322:SF5">
    <property type="entry name" value="1-DEOXY-D-XYLULOSE-5-PHOSPHATE SYNTHASE, CHLOROPLASTIC"/>
    <property type="match status" value="1"/>
</dbReference>
<dbReference type="Pfam" id="PF13292">
    <property type="entry name" value="DXP_synthase_N"/>
    <property type="match status" value="1"/>
</dbReference>
<dbReference type="Pfam" id="PF02779">
    <property type="entry name" value="Transket_pyr"/>
    <property type="match status" value="1"/>
</dbReference>
<dbReference type="Pfam" id="PF02780">
    <property type="entry name" value="Transketolase_C"/>
    <property type="match status" value="1"/>
</dbReference>
<dbReference type="SMART" id="SM00861">
    <property type="entry name" value="Transket_pyr"/>
    <property type="match status" value="1"/>
</dbReference>
<dbReference type="SUPFAM" id="SSF52518">
    <property type="entry name" value="Thiamin diphosphate-binding fold (THDP-binding)"/>
    <property type="match status" value="2"/>
</dbReference>
<dbReference type="SUPFAM" id="SSF52922">
    <property type="entry name" value="TK C-terminal domain-like"/>
    <property type="match status" value="1"/>
</dbReference>
<dbReference type="PROSITE" id="PS00801">
    <property type="entry name" value="TRANSKETOLASE_1"/>
    <property type="match status" value="1"/>
</dbReference>
<evidence type="ECO:0000255" key="1">
    <source>
        <dbReference type="HAMAP-Rule" id="MF_00315"/>
    </source>
</evidence>
<proteinExistence type="inferred from homology"/>
<reference key="1">
    <citation type="journal article" date="2004" name="Nucleic Acids Res.">
        <title>Genome sequence of Symbiobacterium thermophilum, an uncultivable bacterium that depends on microbial commensalism.</title>
        <authorList>
            <person name="Ueda K."/>
            <person name="Yamashita A."/>
            <person name="Ishikawa J."/>
            <person name="Shimada M."/>
            <person name="Watsuji T."/>
            <person name="Morimura K."/>
            <person name="Ikeda H."/>
            <person name="Hattori M."/>
            <person name="Beppu T."/>
        </authorList>
    </citation>
    <scope>NUCLEOTIDE SEQUENCE [LARGE SCALE GENOMIC DNA]</scope>
    <source>
        <strain>DSM 24528 / JCM 14929 / IAM 14863 / T</strain>
    </source>
</reference>
<keyword id="KW-0414">Isoprene biosynthesis</keyword>
<keyword id="KW-0460">Magnesium</keyword>
<keyword id="KW-0479">Metal-binding</keyword>
<keyword id="KW-1185">Reference proteome</keyword>
<keyword id="KW-0784">Thiamine biosynthesis</keyword>
<keyword id="KW-0786">Thiamine pyrophosphate</keyword>
<keyword id="KW-0808">Transferase</keyword>